<evidence type="ECO:0000250" key="1">
    <source>
        <dbReference type="UniProtKB" id="P19414"/>
    </source>
</evidence>
<evidence type="ECO:0000250" key="2">
    <source>
        <dbReference type="UniProtKB" id="Q99798"/>
    </source>
</evidence>
<evidence type="ECO:0000250" key="3">
    <source>
        <dbReference type="UniProtKB" id="Q99KI0"/>
    </source>
</evidence>
<evidence type="ECO:0000250" key="4">
    <source>
        <dbReference type="UniProtKB" id="Q9ER34"/>
    </source>
</evidence>
<evidence type="ECO:0000255" key="5"/>
<evidence type="ECO:0000256" key="6">
    <source>
        <dbReference type="SAM" id="MobiDB-lite"/>
    </source>
</evidence>
<evidence type="ECO:0000269" key="7">
    <source>
    </source>
</evidence>
<evidence type="ECO:0000269" key="8">
    <source>
    </source>
</evidence>
<evidence type="ECO:0000305" key="9"/>
<evidence type="ECO:0007744" key="10">
    <source>
        <dbReference type="PDB" id="8ACN"/>
    </source>
</evidence>
<evidence type="ECO:0007829" key="11">
    <source>
        <dbReference type="PDB" id="1AMI"/>
    </source>
</evidence>
<evidence type="ECO:0007829" key="12">
    <source>
        <dbReference type="PDB" id="1C96"/>
    </source>
</evidence>
<evidence type="ECO:0007829" key="13">
    <source>
        <dbReference type="PDB" id="1C97"/>
    </source>
</evidence>
<reference key="1">
    <citation type="submission" date="1995-06" db="EMBL/GenBank/DDBJ databases">
        <authorList>
            <person name="Xu N."/>
            <person name="Liu W."/>
            <person name="Woldegiogis G."/>
            <person name="Sun X."/>
        </authorList>
    </citation>
    <scope>NUCLEOTIDE SEQUENCE [MRNA]</scope>
    <source>
        <tissue>Heart</tissue>
    </source>
</reference>
<reference key="2">
    <citation type="submission" date="2005-08" db="EMBL/GenBank/DDBJ databases">
        <authorList>
            <consortium name="NIH - Mammalian Gene Collection (MGC) project"/>
        </authorList>
    </citation>
    <scope>NUCLEOTIDE SEQUENCE [LARGE SCALE MRNA]</scope>
    <source>
        <strain>Crossbred X Angus</strain>
        <tissue>Ileum</tissue>
    </source>
</reference>
<reference key="3">
    <citation type="journal article" date="1988" name="J. Biol. Chem.">
        <title>Identification of the reactive sulfhydryl and sequences of cysteinyl-tryptic peptides from beef heart aconitase.</title>
        <authorList>
            <person name="Plank D.W."/>
            <person name="Howard J.B."/>
        </authorList>
    </citation>
    <scope>PRELIMINARY PROTEIN SEQUENCE OF 28-780</scope>
    <source>
        <tissue>Heart</tissue>
    </source>
</reference>
<reference key="4">
    <citation type="journal article" date="1989" name="J. Biol. Chem.">
        <title>Cysteine labeling studies of beef heart aconitase containing a 4Fe, a cubane 3Fe, or a linear 3Fe cluster.</title>
        <authorList>
            <person name="Plank D.W."/>
            <person name="Kennedy M.C."/>
            <person name="Beinert H."/>
            <person name="Howard J.B."/>
        </authorList>
    </citation>
    <scope>PROTEIN SEQUENCE OF 118-139 AND 439-457</scope>
    <scope>CHARACTERIZATION OF IRON-SULFUR CLUSTERS</scope>
    <source>
        <tissue>Heart</tissue>
    </source>
</reference>
<reference key="5">
    <citation type="journal article" date="1992" name="Biochemistry">
        <title>Crystal structures of aconitase with isocitrate and nitroisocitrate bound.</title>
        <authorList>
            <person name="Lauble H."/>
            <person name="Kennedy M.C."/>
            <person name="Beinert H."/>
            <person name="Stout C.D."/>
        </authorList>
    </citation>
    <scope>X-RAY CRYSTALLOGRAPHY (2.0 ANGSTROMS) OF 29-779 IN COMPLEX WITH IRON-SULFUR AND THE SUBSTRATE ANALOG NITROISOCITRATE</scope>
    <scope>COFACTOR</scope>
    <scope>REACTION MECHANISM</scope>
</reference>
<name>ACON_BOVIN</name>
<organism>
    <name type="scientific">Bos taurus</name>
    <name type="common">Bovine</name>
    <dbReference type="NCBI Taxonomy" id="9913"/>
    <lineage>
        <taxon>Eukaryota</taxon>
        <taxon>Metazoa</taxon>
        <taxon>Chordata</taxon>
        <taxon>Craniata</taxon>
        <taxon>Vertebrata</taxon>
        <taxon>Euteleostomi</taxon>
        <taxon>Mammalia</taxon>
        <taxon>Eutheria</taxon>
        <taxon>Laurasiatheria</taxon>
        <taxon>Artiodactyla</taxon>
        <taxon>Ruminantia</taxon>
        <taxon>Pecora</taxon>
        <taxon>Bovidae</taxon>
        <taxon>Bovinae</taxon>
        <taxon>Bos</taxon>
    </lineage>
</organism>
<accession>P20004</accession>
<accession>Q3SZZ1</accession>
<comment type="function">
    <text evidence="1">Catalyzes the isomerization of citrate to isocitrate via cis-aconitate.</text>
</comment>
<comment type="catalytic activity">
    <reaction evidence="1">
        <text>citrate = D-threo-isocitrate</text>
        <dbReference type="Rhea" id="RHEA:10336"/>
        <dbReference type="ChEBI" id="CHEBI:15562"/>
        <dbReference type="ChEBI" id="CHEBI:16947"/>
        <dbReference type="EC" id="4.2.1.3"/>
    </reaction>
</comment>
<comment type="cofactor">
    <cofactor evidence="7">
        <name>[4Fe-4S] cluster</name>
        <dbReference type="ChEBI" id="CHEBI:49883"/>
    </cofactor>
    <text evidence="7">Binds 1 [4Fe-4S] cluster per subunit. Binding of a [3Fe-4S] cluster leads to an inactive enzyme.</text>
</comment>
<comment type="pathway">
    <text evidence="1">Carbohydrate metabolism; tricarboxylic acid cycle; isocitrate from oxaloacetate: step 2/2.</text>
</comment>
<comment type="subunit">
    <text evidence="7">Monomer.</text>
</comment>
<comment type="subcellular location">
    <subcellularLocation>
        <location evidence="5">Mitochondrion</location>
    </subcellularLocation>
</comment>
<comment type="PTM">
    <text evidence="4">Forms covalent cross-links mediated by transglutaminase TGM2, between a glutamine and the epsilon-amino group of a lysine residue, forming homopolymers and heteropolymers.</text>
</comment>
<comment type="similarity">
    <text evidence="9">Belongs to the aconitase/IPM isomerase family.</text>
</comment>
<proteinExistence type="evidence at protein level"/>
<feature type="transit peptide" description="Mitochondrion" evidence="5">
    <location>
        <begin position="1"/>
        <end position="27"/>
    </location>
</feature>
<feature type="chain" id="PRO_0000000540" description="Aconitate hydratase, mitochondrial">
    <location>
        <begin position="28"/>
        <end position="780"/>
    </location>
</feature>
<feature type="region of interest" description="Disordered" evidence="6">
    <location>
        <begin position="524"/>
        <end position="560"/>
    </location>
</feature>
<feature type="compositionally biased region" description="Basic and acidic residues" evidence="6">
    <location>
        <begin position="524"/>
        <end position="537"/>
    </location>
</feature>
<feature type="compositionally biased region" description="Polar residues" evidence="6">
    <location>
        <begin position="551"/>
        <end position="560"/>
    </location>
</feature>
<feature type="binding site" evidence="7 10">
    <location>
        <position position="99"/>
    </location>
    <ligand>
        <name>substrate</name>
    </ligand>
</feature>
<feature type="binding site" evidence="7 10">
    <location>
        <begin position="192"/>
        <end position="194"/>
    </location>
    <ligand>
        <name>substrate</name>
    </ligand>
</feature>
<feature type="binding site" evidence="7 8 10">
    <location>
        <position position="385"/>
    </location>
    <ligand>
        <name>[4Fe-4S] cluster</name>
        <dbReference type="ChEBI" id="CHEBI:49883"/>
    </ligand>
</feature>
<feature type="binding site" evidence="7 8 10">
    <location>
        <position position="448"/>
    </location>
    <ligand>
        <name>[4Fe-4S] cluster</name>
        <dbReference type="ChEBI" id="CHEBI:49883"/>
    </ligand>
</feature>
<feature type="binding site" evidence="7 8 10">
    <location>
        <position position="451"/>
    </location>
    <ligand>
        <name>[4Fe-4S] cluster</name>
        <dbReference type="ChEBI" id="CHEBI:49883"/>
    </ligand>
</feature>
<feature type="binding site" evidence="7 10">
    <location>
        <position position="474"/>
    </location>
    <ligand>
        <name>substrate</name>
    </ligand>
</feature>
<feature type="binding site" evidence="7 10">
    <location>
        <position position="479"/>
    </location>
    <ligand>
        <name>substrate</name>
    </ligand>
</feature>
<feature type="binding site" evidence="7 10">
    <location>
        <position position="607"/>
    </location>
    <ligand>
        <name>substrate</name>
    </ligand>
</feature>
<feature type="binding site" evidence="7 10">
    <location>
        <begin position="670"/>
        <end position="671"/>
    </location>
    <ligand>
        <name>substrate</name>
    </ligand>
</feature>
<feature type="modified residue" description="N6-succinyllysine" evidence="3">
    <location>
        <position position="31"/>
    </location>
</feature>
<feature type="modified residue" description="N6-acetyllysine; alternate" evidence="3">
    <location>
        <position position="50"/>
    </location>
</feature>
<feature type="modified residue" description="N6-succinyllysine; alternate" evidence="3">
    <location>
        <position position="50"/>
    </location>
</feature>
<feature type="modified residue" description="N6-acetyllysine; alternate" evidence="3">
    <location>
        <position position="138"/>
    </location>
</feature>
<feature type="modified residue" description="N6-succinyllysine; alternate" evidence="3">
    <location>
        <position position="138"/>
    </location>
</feature>
<feature type="modified residue" description="N6-acetyllysine; alternate" evidence="3">
    <location>
        <position position="144"/>
    </location>
</feature>
<feature type="modified residue" description="N6-succinyllysine; alternate" evidence="3">
    <location>
        <position position="144"/>
    </location>
</feature>
<feature type="modified residue" description="N6-acetyllysine; alternate" evidence="3">
    <location>
        <position position="233"/>
    </location>
</feature>
<feature type="modified residue" description="N6-succinyllysine; alternate" evidence="3">
    <location>
        <position position="233"/>
    </location>
</feature>
<feature type="modified residue" description="N6-succinyllysine" evidence="3">
    <location>
        <position position="411"/>
    </location>
</feature>
<feature type="modified residue" description="N6-acetyllysine; alternate" evidence="3">
    <location>
        <position position="517"/>
    </location>
</feature>
<feature type="modified residue" description="N6-succinyllysine; alternate" evidence="3">
    <location>
        <position position="517"/>
    </location>
</feature>
<feature type="modified residue" description="N6-acetyllysine; alternate" evidence="3">
    <location>
        <position position="523"/>
    </location>
</feature>
<feature type="modified residue" description="N6-succinyllysine; alternate" evidence="3">
    <location>
        <position position="523"/>
    </location>
</feature>
<feature type="modified residue" description="N6-succinyllysine" evidence="3">
    <location>
        <position position="549"/>
    </location>
</feature>
<feature type="modified residue" description="Phosphoserine" evidence="2">
    <location>
        <position position="559"/>
    </location>
</feature>
<feature type="modified residue" description="N6-acetyllysine; alternate" evidence="2">
    <location>
        <position position="573"/>
    </location>
</feature>
<feature type="modified residue" description="N6-succinyllysine; alternate" evidence="3">
    <location>
        <position position="573"/>
    </location>
</feature>
<feature type="modified residue" description="N6-succinyllysine" evidence="3">
    <location>
        <position position="591"/>
    </location>
</feature>
<feature type="modified residue" description="N6-acetyllysine; alternate" evidence="2">
    <location>
        <position position="605"/>
    </location>
</feature>
<feature type="modified residue" description="N6-succinyllysine; alternate" evidence="3">
    <location>
        <position position="605"/>
    </location>
</feature>
<feature type="modified residue" description="N6-succinyllysine" evidence="3">
    <location>
        <position position="628"/>
    </location>
</feature>
<feature type="modified residue" description="Phosphoserine" evidence="3">
    <location>
        <position position="670"/>
    </location>
</feature>
<feature type="modified residue" description="N6-succinyllysine" evidence="3">
    <location>
        <position position="689"/>
    </location>
</feature>
<feature type="modified residue" description="N6-acetyllysine; alternate" evidence="3">
    <location>
        <position position="723"/>
    </location>
</feature>
<feature type="modified residue" description="N6-succinyllysine; alternate" evidence="3">
    <location>
        <position position="723"/>
    </location>
</feature>
<feature type="modified residue" description="N6-acetyllysine; alternate" evidence="3">
    <location>
        <position position="730"/>
    </location>
</feature>
<feature type="modified residue" description="N6-succinyllysine; alternate" evidence="3">
    <location>
        <position position="730"/>
    </location>
</feature>
<feature type="modified residue" description="N6-acetyllysine" evidence="3">
    <location>
        <position position="736"/>
    </location>
</feature>
<feature type="modified residue" description="N6-acetyllysine" evidence="3">
    <location>
        <position position="743"/>
    </location>
</feature>
<feature type="sequence conflict" description="In Ref. 3; AA sequence." evidence="9" ref="3">
    <original>N</original>
    <variation>H</variation>
    <location>
        <position position="40"/>
    </location>
</feature>
<feature type="sequence conflict" description="In Ref. 3; AA sequence." evidence="9" ref="3">
    <original>N</original>
    <variation>D</variation>
    <location>
        <position position="53"/>
    </location>
</feature>
<feature type="sequence conflict" description="In Ref. 1; CAA90177." evidence="9" ref="1">
    <original>Q</original>
    <variation>R</variation>
    <location>
        <position position="99"/>
    </location>
</feature>
<feature type="sequence conflict" description="In Ref. 2; AAI02643." evidence="9" ref="2">
    <original>E</original>
    <variation>G</variation>
    <location>
        <position position="179"/>
    </location>
</feature>
<feature type="sequence conflict" description="In Ref. 1; CAA90177." evidence="9" ref="1">
    <original>M</original>
    <variation>T</variation>
    <location>
        <position position="217"/>
    </location>
</feature>
<feature type="sequence conflict" description="In Ref. 3; AA sequence." evidence="9" ref="3">
    <original>Q</original>
    <variation>K</variation>
    <location>
        <position position="409"/>
    </location>
</feature>
<feature type="sequence conflict" description="In Ref. 3; AA sequence." evidence="9" ref="3">
    <original>I</original>
    <variation>V</variation>
    <location>
        <position position="435"/>
    </location>
</feature>
<feature type="sequence conflict" description="In Ref. 3; AA sequence." evidence="9" ref="3">
    <original>Q</original>
    <variation>R</variation>
    <location>
        <position position="555"/>
    </location>
</feature>
<feature type="sequence conflict" description="In Ref. 3; AA sequence." evidence="9" ref="3">
    <original>R</original>
    <variation>K</variation>
    <location>
        <position position="577"/>
    </location>
</feature>
<feature type="sequence conflict" description="In Ref. 3; AA sequence." evidence="9" ref="3">
    <original>V</original>
    <variation>S</variation>
    <location>
        <position position="624"/>
    </location>
</feature>
<feature type="sequence conflict" description="In Ref. 3; AA sequence." evidence="9" ref="3">
    <original>G</original>
    <variation>R</variation>
    <location>
        <position position="627"/>
    </location>
</feature>
<feature type="sequence conflict" description="In Ref. 3; AA sequence." evidence="9" ref="3">
    <original>K</original>
    <variation>Q</variation>
    <location>
        <position position="652"/>
    </location>
</feature>
<feature type="sequence conflict" description="In Ref. 3; AA sequence." evidence="9" ref="3">
    <original>A</original>
    <variation>S</variation>
    <location>
        <position position="674"/>
    </location>
</feature>
<feature type="sequence conflict" description="In Ref. 3; AA sequence." evidence="9" ref="3">
    <original>H</original>
    <variation>F</variation>
    <location>
        <position position="680"/>
    </location>
</feature>
<feature type="sequence conflict" description="In Ref. 3; AA sequence." evidence="9" ref="3">
    <original>K</original>
    <variation>Q</variation>
    <location>
        <position position="727"/>
    </location>
</feature>
<feature type="strand" evidence="12">
    <location>
        <begin position="33"/>
        <end position="35"/>
    </location>
</feature>
<feature type="strand" evidence="13">
    <location>
        <begin position="38"/>
        <end position="42"/>
    </location>
</feature>
<feature type="helix" evidence="12">
    <location>
        <begin position="45"/>
        <end position="59"/>
    </location>
</feature>
<feature type="helix" evidence="12">
    <location>
        <begin position="65"/>
        <end position="71"/>
    </location>
</feature>
<feature type="turn" evidence="12">
    <location>
        <begin position="77"/>
        <end position="79"/>
    </location>
</feature>
<feature type="turn" evidence="12">
    <location>
        <begin position="84"/>
        <end position="86"/>
    </location>
</feature>
<feature type="strand" evidence="12">
    <location>
        <begin position="88"/>
        <end position="91"/>
    </location>
</feature>
<feature type="strand" evidence="12">
    <location>
        <begin position="94"/>
        <end position="99"/>
    </location>
</feature>
<feature type="turn" evidence="12">
    <location>
        <begin position="100"/>
        <end position="102"/>
    </location>
</feature>
<feature type="helix" evidence="12">
    <location>
        <begin position="103"/>
        <end position="113"/>
    </location>
</feature>
<feature type="strand" evidence="12">
    <location>
        <begin position="122"/>
        <end position="125"/>
    </location>
</feature>
<feature type="strand" evidence="12">
    <location>
        <begin position="132"/>
        <end position="134"/>
    </location>
</feature>
<feature type="helix" evidence="12">
    <location>
        <begin position="136"/>
        <end position="146"/>
    </location>
</feature>
<feature type="helix" evidence="12">
    <location>
        <begin position="148"/>
        <end position="161"/>
    </location>
</feature>
<feature type="strand" evidence="12">
    <location>
        <begin position="164"/>
        <end position="166"/>
    </location>
</feature>
<feature type="helix" evidence="12">
    <location>
        <begin position="173"/>
        <end position="180"/>
    </location>
</feature>
<feature type="strand" evidence="12">
    <location>
        <begin position="187"/>
        <end position="192"/>
    </location>
</feature>
<feature type="helix" evidence="12">
    <location>
        <begin position="195"/>
        <end position="201"/>
    </location>
</feature>
<feature type="strand" evidence="12">
    <location>
        <begin position="204"/>
        <end position="207"/>
    </location>
</feature>
<feature type="helix" evidence="12">
    <location>
        <begin position="210"/>
        <end position="218"/>
    </location>
</feature>
<feature type="strand" evidence="12">
    <location>
        <begin position="222"/>
        <end position="225"/>
    </location>
</feature>
<feature type="strand" evidence="12">
    <location>
        <begin position="228"/>
        <end position="236"/>
    </location>
</feature>
<feature type="helix" evidence="12">
    <location>
        <begin position="244"/>
        <end position="255"/>
    </location>
</feature>
<feature type="turn" evidence="12">
    <location>
        <begin position="256"/>
        <end position="262"/>
    </location>
</feature>
<feature type="strand" evidence="12">
    <location>
        <begin position="263"/>
        <end position="269"/>
    </location>
</feature>
<feature type="helix" evidence="12">
    <location>
        <begin position="270"/>
        <end position="274"/>
    </location>
</feature>
<feature type="helix" evidence="12">
    <location>
        <begin position="277"/>
        <end position="286"/>
    </location>
</feature>
<feature type="helix" evidence="12">
    <location>
        <begin position="287"/>
        <end position="290"/>
    </location>
</feature>
<feature type="strand" evidence="12">
    <location>
        <begin position="293"/>
        <end position="296"/>
    </location>
</feature>
<feature type="helix" evidence="12">
    <location>
        <begin position="301"/>
        <end position="309"/>
    </location>
</feature>
<feature type="helix" evidence="12">
    <location>
        <begin position="313"/>
        <end position="321"/>
    </location>
</feature>
<feature type="helix" evidence="12">
    <location>
        <begin position="323"/>
        <end position="325"/>
    </location>
</feature>
<feature type="strand" evidence="12">
    <location>
        <begin position="335"/>
        <end position="341"/>
    </location>
</feature>
<feature type="helix" evidence="12">
    <location>
        <begin position="342"/>
        <end position="344"/>
    </location>
</feature>
<feature type="strand" evidence="12">
    <location>
        <begin position="348"/>
        <end position="350"/>
    </location>
</feature>
<feature type="strand" evidence="12">
    <location>
        <begin position="352"/>
        <end position="354"/>
    </location>
</feature>
<feature type="strand" evidence="12">
    <location>
        <begin position="358"/>
        <end position="360"/>
    </location>
</feature>
<feature type="helix" evidence="12">
    <location>
        <begin position="361"/>
        <end position="371"/>
    </location>
</feature>
<feature type="strand" evidence="12">
    <location>
        <begin position="376"/>
        <end position="383"/>
    </location>
</feature>
<feature type="turn" evidence="12">
    <location>
        <begin position="384"/>
        <end position="386"/>
    </location>
</feature>
<feature type="helix" evidence="12">
    <location>
        <begin position="390"/>
        <end position="404"/>
    </location>
</feature>
<feature type="turn" evidence="12">
    <location>
        <begin position="405"/>
        <end position="407"/>
    </location>
</feature>
<feature type="strand" evidence="12">
    <location>
        <begin position="411"/>
        <end position="416"/>
    </location>
</feature>
<feature type="helix" evidence="12">
    <location>
        <begin position="421"/>
        <end position="429"/>
    </location>
</feature>
<feature type="helix" evidence="12">
    <location>
        <begin position="432"/>
        <end position="438"/>
    </location>
</feature>
<feature type="strand" evidence="12">
    <location>
        <begin position="441"/>
        <end position="443"/>
    </location>
</feature>
<feature type="helix" evidence="12">
    <location>
        <begin position="449"/>
        <end position="452"/>
    </location>
</feature>
<feature type="strand" evidence="12">
    <location>
        <begin position="466"/>
        <end position="473"/>
    </location>
</feature>
<feature type="turn" evidence="12">
    <location>
        <begin position="477"/>
        <end position="481"/>
    </location>
</feature>
<feature type="strand" evidence="12">
    <location>
        <begin position="486"/>
        <end position="490"/>
    </location>
</feature>
<feature type="helix" evidence="12">
    <location>
        <begin position="493"/>
        <end position="502"/>
    </location>
</feature>
<feature type="strand" evidence="11">
    <location>
        <begin position="504"/>
        <end position="506"/>
    </location>
</feature>
<feature type="turn" evidence="12">
    <location>
        <begin position="509"/>
        <end position="511"/>
    </location>
</feature>
<feature type="strand" evidence="13">
    <location>
        <begin position="513"/>
        <end position="515"/>
    </location>
</feature>
<feature type="strand" evidence="13">
    <location>
        <begin position="521"/>
        <end position="523"/>
    </location>
</feature>
<feature type="turn" evidence="13">
    <location>
        <begin position="549"/>
        <end position="551"/>
    </location>
</feature>
<feature type="strand" evidence="12">
    <location>
        <begin position="563"/>
        <end position="565"/>
    </location>
</feature>
<feature type="strand" evidence="12">
    <location>
        <begin position="579"/>
        <end position="588"/>
    </location>
</feature>
<feature type="helix" evidence="12">
    <location>
        <begin position="594"/>
        <end position="597"/>
    </location>
</feature>
<feature type="helix" evidence="12">
    <location>
        <begin position="601"/>
        <end position="606"/>
    </location>
</feature>
<feature type="helix" evidence="12">
    <location>
        <begin position="610"/>
        <end position="613"/>
    </location>
</feature>
<feature type="helix" evidence="12">
    <location>
        <begin position="614"/>
        <end position="616"/>
    </location>
</feature>
<feature type="turn" evidence="12">
    <location>
        <begin position="618"/>
        <end position="620"/>
    </location>
</feature>
<feature type="strand" evidence="12">
    <location>
        <begin position="621"/>
        <end position="623"/>
    </location>
</feature>
<feature type="turn" evidence="12">
    <location>
        <begin position="624"/>
        <end position="626"/>
    </location>
</feature>
<feature type="turn" evidence="12">
    <location>
        <begin position="635"/>
        <end position="637"/>
    </location>
</feature>
<feature type="helix" evidence="12">
    <location>
        <begin position="643"/>
        <end position="652"/>
    </location>
</feature>
<feature type="strand" evidence="12">
    <location>
        <begin position="657"/>
        <end position="660"/>
    </location>
</feature>
<feature type="strand" evidence="12">
    <location>
        <begin position="663"/>
        <end position="665"/>
    </location>
</feature>
<feature type="helix" evidence="12">
    <location>
        <begin position="673"/>
        <end position="680"/>
    </location>
</feature>
<feature type="strand" evidence="12">
    <location>
        <begin position="683"/>
        <end position="689"/>
    </location>
</feature>
<feature type="helix" evidence="12">
    <location>
        <begin position="693"/>
        <end position="701"/>
    </location>
</feature>
<feature type="strand" evidence="12">
    <location>
        <begin position="705"/>
        <end position="711"/>
    </location>
</feature>
<feature type="helix" evidence="12">
    <location>
        <begin position="712"/>
        <end position="717"/>
    </location>
</feature>
<feature type="strand" evidence="12">
    <location>
        <begin position="723"/>
        <end position="727"/>
    </location>
</feature>
<feature type="helix" evidence="12">
    <location>
        <begin position="729"/>
        <end position="731"/>
    </location>
</feature>
<feature type="strand" evidence="12">
    <location>
        <begin position="738"/>
        <end position="743"/>
    </location>
</feature>
<feature type="strand" evidence="12">
    <location>
        <begin position="749"/>
        <end position="755"/>
    </location>
</feature>
<feature type="helix" evidence="12">
    <location>
        <begin position="760"/>
        <end position="768"/>
    </location>
</feature>
<feature type="helix" evidence="12">
    <location>
        <begin position="771"/>
        <end position="778"/>
    </location>
</feature>
<keyword id="KW-0002">3D-structure</keyword>
<keyword id="KW-0004">4Fe-4S</keyword>
<keyword id="KW-0007">Acetylation</keyword>
<keyword id="KW-0903">Direct protein sequencing</keyword>
<keyword id="KW-0408">Iron</keyword>
<keyword id="KW-0411">Iron-sulfur</keyword>
<keyword id="KW-0456">Lyase</keyword>
<keyword id="KW-0479">Metal-binding</keyword>
<keyword id="KW-0496">Mitochondrion</keyword>
<keyword id="KW-0597">Phosphoprotein</keyword>
<keyword id="KW-1185">Reference proteome</keyword>
<keyword id="KW-0809">Transit peptide</keyword>
<keyword id="KW-0816">Tricarboxylic acid cycle</keyword>
<gene>
    <name type="primary">ACO2</name>
</gene>
<sequence>MAPYSLLVSRLQKALGARQYHVASVLCQRAKVAMSHFEPNEYIRYDLLEKNINIVRKRLNRPLTLSEKIVYGHLDDPANQEIERGKTYLRLRPDRVAMQDATAQMAMLQFISSGLPKVAVPSTIHCDHLIEAQLGGEKDLRRAKDINQEVYNFLATAGAKYGVGFWRPGSGIIHQIILENYAYPGVLLIGTDSHTPNGGGLGGICIGVGGADAVDVMAGIPWELKCPKVIGVKLTGSLSGWTSPKDVILKVAGILTVKGGTGAIVEYHGPGVDSISCTGMATICNMGAEIGATTSVFPYNHRMKKYLSKTGRADIANLADEFKDHLVPDSGCHYDQLIEINLSELKPHINGPFTPDLAHPVAEVGSVAEKEGWPLDIRVGLIGSCTNSSYEDMGRSAAVAKQALAHGLQCKSQFTITPGSEQIRATIERDGYAQILRDVGGIVLANACGPCIGQWDRKDIKKGEKNTIVTSYNRNFTGRNDANPETHAFVTSPEIVTALAIAGTLKFNPETDFLTGKDGKKFKLEAPDADELPRAEFDPGQDTYQHPPKDSSGQQVDVSPTSQRLQLLEPFDKWDGRDLEDLQILIKVKGKCTTDHISAAGPWLKFRGHLDNISNNLLIGAINVENGKANSVRNAVTQEFGPVPDTARYYKKHGIRWVVIGDENYGEGSSREHAALEPRHLGGRAIITKSFARIHETNLKKQGLLPLTFADPADYNKIHPVDKLTIKGLKDFAPGKPLTCIIKHPNGTQETILLNHTFNETQIEWFRAGSALNRMKELQK</sequence>
<protein>
    <recommendedName>
        <fullName>Aconitate hydratase, mitochondrial</fullName>
        <shortName>Aconitase</shortName>
        <ecNumber>4.2.1.3</ecNumber>
    </recommendedName>
    <alternativeName>
        <fullName>Citrate hydro-lyase</fullName>
    </alternativeName>
</protein>
<dbReference type="EC" id="4.2.1.3"/>
<dbReference type="EMBL" id="Z49931">
    <property type="protein sequence ID" value="CAA90177.1"/>
    <property type="molecule type" value="mRNA"/>
</dbReference>
<dbReference type="EMBL" id="BC102642">
    <property type="protein sequence ID" value="AAI02643.1"/>
    <property type="molecule type" value="mRNA"/>
</dbReference>
<dbReference type="PIR" id="S57528">
    <property type="entry name" value="S57528"/>
</dbReference>
<dbReference type="RefSeq" id="NP_776402.1">
    <property type="nucleotide sequence ID" value="NM_173977.3"/>
</dbReference>
<dbReference type="PDB" id="1ACO">
    <property type="method" value="X-ray"/>
    <property type="resolution" value="2.05 A"/>
    <property type="chains" value="A=29-779"/>
</dbReference>
<dbReference type="PDB" id="1AMI">
    <property type="method" value="X-ray"/>
    <property type="resolution" value="2.00 A"/>
    <property type="chains" value="A=28-780"/>
</dbReference>
<dbReference type="PDB" id="1AMJ">
    <property type="method" value="X-ray"/>
    <property type="resolution" value="2.00 A"/>
    <property type="chains" value="A=28-780"/>
</dbReference>
<dbReference type="PDB" id="1C96">
    <property type="method" value="X-ray"/>
    <property type="resolution" value="1.81 A"/>
    <property type="chains" value="A=29-779"/>
</dbReference>
<dbReference type="PDB" id="1C97">
    <property type="method" value="X-ray"/>
    <property type="resolution" value="1.98 A"/>
    <property type="chains" value="A=29-779"/>
</dbReference>
<dbReference type="PDB" id="1FGH">
    <property type="method" value="X-ray"/>
    <property type="resolution" value="2.05 A"/>
    <property type="chains" value="A=29-779"/>
</dbReference>
<dbReference type="PDB" id="1NIS">
    <property type="method" value="X-ray"/>
    <property type="resolution" value="2.05 A"/>
    <property type="chains" value="A=29-779"/>
</dbReference>
<dbReference type="PDB" id="1NIT">
    <property type="method" value="X-ray"/>
    <property type="resolution" value="2.05 A"/>
    <property type="chains" value="A=29-779"/>
</dbReference>
<dbReference type="PDB" id="8ACN">
    <property type="method" value="X-ray"/>
    <property type="resolution" value="2.00 A"/>
    <property type="chains" value="A=29-780"/>
</dbReference>
<dbReference type="PDBsum" id="1ACO"/>
<dbReference type="PDBsum" id="1AMI"/>
<dbReference type="PDBsum" id="1AMJ"/>
<dbReference type="PDBsum" id="1C96"/>
<dbReference type="PDBsum" id="1C97"/>
<dbReference type="PDBsum" id="1FGH"/>
<dbReference type="PDBsum" id="1NIS"/>
<dbReference type="PDBsum" id="1NIT"/>
<dbReference type="PDBsum" id="8ACN"/>
<dbReference type="SMR" id="P20004"/>
<dbReference type="FunCoup" id="P20004">
    <property type="interactions" value="2211"/>
</dbReference>
<dbReference type="IntAct" id="P20004">
    <property type="interactions" value="1"/>
</dbReference>
<dbReference type="STRING" id="9913.ENSBTAP00000008431"/>
<dbReference type="PaxDb" id="9913-ENSBTAP00000008431"/>
<dbReference type="PeptideAtlas" id="P20004"/>
<dbReference type="Ensembl" id="ENSBTAT00000126438.1">
    <property type="protein sequence ID" value="ENSBTAP00000078293.1"/>
    <property type="gene ID" value="ENSBTAG00000006429.6"/>
</dbReference>
<dbReference type="GeneID" id="280976"/>
<dbReference type="KEGG" id="bta:280976"/>
<dbReference type="CTD" id="50"/>
<dbReference type="VEuPathDB" id="HostDB:ENSBTAG00000006429"/>
<dbReference type="VGNC" id="VGNC:25546">
    <property type="gene designation" value="ACO2"/>
</dbReference>
<dbReference type="eggNOG" id="KOG0453">
    <property type="taxonomic scope" value="Eukaryota"/>
</dbReference>
<dbReference type="GeneTree" id="ENSGT00940000154892"/>
<dbReference type="HOGENOM" id="CLU_006714_2_2_1"/>
<dbReference type="InParanoid" id="P20004"/>
<dbReference type="OMA" id="KKQGMLG"/>
<dbReference type="OrthoDB" id="2224430at2759"/>
<dbReference type="TreeFam" id="TF300627"/>
<dbReference type="Reactome" id="R-BTA-71403">
    <property type="pathway name" value="Citric acid cycle (TCA cycle)"/>
</dbReference>
<dbReference type="Reactome" id="R-BTA-9837999">
    <property type="pathway name" value="Mitochondrial protein degradation"/>
</dbReference>
<dbReference type="Reactome" id="R-BTA-9854311">
    <property type="pathway name" value="Maturation of TCA enzymes and regulation of TCA cycle"/>
</dbReference>
<dbReference type="UniPathway" id="UPA00223">
    <property type="reaction ID" value="UER00718"/>
</dbReference>
<dbReference type="EvolutionaryTrace" id="P20004"/>
<dbReference type="Proteomes" id="UP000009136">
    <property type="component" value="Chromosome 5"/>
</dbReference>
<dbReference type="Bgee" id="ENSBTAG00000006429">
    <property type="expression patterns" value="Expressed in corpus luteum and 107 other cell types or tissues"/>
</dbReference>
<dbReference type="GO" id="GO:0005829">
    <property type="term" value="C:cytosol"/>
    <property type="evidence" value="ECO:0000318"/>
    <property type="project" value="GO_Central"/>
</dbReference>
<dbReference type="GO" id="GO:0005739">
    <property type="term" value="C:mitochondrion"/>
    <property type="evidence" value="ECO:0000314"/>
    <property type="project" value="CAFA"/>
</dbReference>
<dbReference type="GO" id="GO:0051538">
    <property type="term" value="F:3 iron, 4 sulfur cluster binding"/>
    <property type="evidence" value="ECO:0000314"/>
    <property type="project" value="CAFA"/>
</dbReference>
<dbReference type="GO" id="GO:0051539">
    <property type="term" value="F:4 iron, 4 sulfur cluster binding"/>
    <property type="evidence" value="ECO:0000314"/>
    <property type="project" value="CAFA"/>
</dbReference>
<dbReference type="GO" id="GO:0003994">
    <property type="term" value="F:aconitate hydratase activity"/>
    <property type="evidence" value="ECO:0000314"/>
    <property type="project" value="CAFA"/>
</dbReference>
<dbReference type="GO" id="GO:0008198">
    <property type="term" value="F:ferrous iron binding"/>
    <property type="evidence" value="ECO:0000314"/>
    <property type="project" value="CAFA"/>
</dbReference>
<dbReference type="GO" id="GO:0005506">
    <property type="term" value="F:iron ion binding"/>
    <property type="evidence" value="ECO:0000250"/>
    <property type="project" value="AgBase"/>
</dbReference>
<dbReference type="GO" id="GO:0006101">
    <property type="term" value="P:citrate metabolic process"/>
    <property type="evidence" value="ECO:0000314"/>
    <property type="project" value="CAFA"/>
</dbReference>
<dbReference type="GO" id="GO:0006099">
    <property type="term" value="P:tricarboxylic acid cycle"/>
    <property type="evidence" value="ECO:0000250"/>
    <property type="project" value="AgBase"/>
</dbReference>
<dbReference type="CDD" id="cd01578">
    <property type="entry name" value="AcnA_Mitochon_Swivel"/>
    <property type="match status" value="1"/>
</dbReference>
<dbReference type="CDD" id="cd01584">
    <property type="entry name" value="AcnA_Mitochondrial"/>
    <property type="match status" value="1"/>
</dbReference>
<dbReference type="FunFam" id="3.20.19.10:FF:000002">
    <property type="entry name" value="Aconitate hydratase, mitochondrial"/>
    <property type="match status" value="1"/>
</dbReference>
<dbReference type="FunFam" id="3.30.499.10:FF:000003">
    <property type="entry name" value="Aconitate hydratase, mitochondrial"/>
    <property type="match status" value="1"/>
</dbReference>
<dbReference type="FunFam" id="3.30.499.10:FF:000004">
    <property type="entry name" value="Aconitate hydratase, mitochondrial"/>
    <property type="match status" value="1"/>
</dbReference>
<dbReference type="FunFam" id="3.40.1060.10:FF:000001">
    <property type="entry name" value="Aconitate hydratase, mitochondrial"/>
    <property type="match status" value="1"/>
</dbReference>
<dbReference type="Gene3D" id="3.40.1060.10">
    <property type="entry name" value="Aconitase, Domain 2"/>
    <property type="match status" value="1"/>
</dbReference>
<dbReference type="Gene3D" id="3.30.499.10">
    <property type="entry name" value="Aconitase, domain 3"/>
    <property type="match status" value="2"/>
</dbReference>
<dbReference type="Gene3D" id="3.20.19.10">
    <property type="entry name" value="Aconitase, domain 4"/>
    <property type="match status" value="1"/>
</dbReference>
<dbReference type="InterPro" id="IPR015931">
    <property type="entry name" value="Acnase/IPM_dHydase_lsu_aba_1/3"/>
</dbReference>
<dbReference type="InterPro" id="IPR001030">
    <property type="entry name" value="Acoase/IPM_deHydtase_lsu_aba"/>
</dbReference>
<dbReference type="InterPro" id="IPR015928">
    <property type="entry name" value="Aconitase/3IPM_dehydase_swvl"/>
</dbReference>
<dbReference type="InterPro" id="IPR050926">
    <property type="entry name" value="Aconitase/IPM_isomerase"/>
</dbReference>
<dbReference type="InterPro" id="IPR018136">
    <property type="entry name" value="Aconitase_4Fe-4S_BS"/>
</dbReference>
<dbReference type="InterPro" id="IPR036008">
    <property type="entry name" value="Aconitase_4Fe-4S_dom"/>
</dbReference>
<dbReference type="InterPro" id="IPR015932">
    <property type="entry name" value="Aconitase_dom2"/>
</dbReference>
<dbReference type="InterPro" id="IPR006248">
    <property type="entry name" value="Aconitase_mito-like"/>
</dbReference>
<dbReference type="InterPro" id="IPR000573">
    <property type="entry name" value="AconitaseA/IPMdHydase_ssu_swvl"/>
</dbReference>
<dbReference type="NCBIfam" id="TIGR01340">
    <property type="entry name" value="aconitase_mito"/>
    <property type="match status" value="1"/>
</dbReference>
<dbReference type="NCBIfam" id="NF005558">
    <property type="entry name" value="PRK07229.1"/>
    <property type="match status" value="1"/>
</dbReference>
<dbReference type="PANTHER" id="PTHR43160">
    <property type="entry name" value="ACONITATE HYDRATASE B"/>
    <property type="match status" value="1"/>
</dbReference>
<dbReference type="PANTHER" id="PTHR43160:SF3">
    <property type="entry name" value="ACONITATE HYDRATASE, MITOCHONDRIAL"/>
    <property type="match status" value="1"/>
</dbReference>
<dbReference type="Pfam" id="PF00330">
    <property type="entry name" value="Aconitase"/>
    <property type="match status" value="1"/>
</dbReference>
<dbReference type="Pfam" id="PF00694">
    <property type="entry name" value="Aconitase_C"/>
    <property type="match status" value="1"/>
</dbReference>
<dbReference type="PRINTS" id="PR00415">
    <property type="entry name" value="ACONITASE"/>
</dbReference>
<dbReference type="SUPFAM" id="SSF53732">
    <property type="entry name" value="Aconitase iron-sulfur domain"/>
    <property type="match status" value="1"/>
</dbReference>
<dbReference type="SUPFAM" id="SSF52016">
    <property type="entry name" value="LeuD/IlvD-like"/>
    <property type="match status" value="1"/>
</dbReference>
<dbReference type="PROSITE" id="PS00450">
    <property type="entry name" value="ACONITASE_1"/>
    <property type="match status" value="1"/>
</dbReference>
<dbReference type="PROSITE" id="PS01244">
    <property type="entry name" value="ACONITASE_2"/>
    <property type="match status" value="1"/>
</dbReference>